<gene>
    <name type="primary">swi5</name>
    <name type="synonym">sae3</name>
</gene>
<keyword id="KW-0175">Coiled coil</keyword>
<keyword id="KW-0227">DNA damage</keyword>
<keyword id="KW-0234">DNA repair</keyword>
<keyword id="KW-0539">Nucleus</keyword>
<dbReference type="EMBL" id="BT083067">
    <property type="protein sequence ID" value="ACQ58774.1"/>
    <property type="molecule type" value="mRNA"/>
</dbReference>
<dbReference type="SMR" id="C3KJF2"/>
<dbReference type="GO" id="GO:0005634">
    <property type="term" value="C:nucleus"/>
    <property type="evidence" value="ECO:0000250"/>
    <property type="project" value="UniProtKB"/>
</dbReference>
<dbReference type="GO" id="GO:0032798">
    <property type="term" value="C:Swi5-Sfr1 complex"/>
    <property type="evidence" value="ECO:0000250"/>
    <property type="project" value="UniProtKB"/>
</dbReference>
<dbReference type="GO" id="GO:0034974">
    <property type="term" value="C:Swi5-Swi2 complex"/>
    <property type="evidence" value="ECO:0007669"/>
    <property type="project" value="TreeGrafter"/>
</dbReference>
<dbReference type="GO" id="GO:0000724">
    <property type="term" value="P:double-strand break repair via homologous recombination"/>
    <property type="evidence" value="ECO:0000250"/>
    <property type="project" value="UniProtKB"/>
</dbReference>
<dbReference type="FunFam" id="1.20.5.170:FF:000056">
    <property type="entry name" value="DNA repair protein SWI5 homolog"/>
    <property type="match status" value="1"/>
</dbReference>
<dbReference type="Gene3D" id="1.20.5.170">
    <property type="match status" value="1"/>
</dbReference>
<dbReference type="InterPro" id="IPR010760">
    <property type="entry name" value="DNA-repair_Swi5"/>
</dbReference>
<dbReference type="PANTHER" id="PTHR28529">
    <property type="entry name" value="DNA REPAIR PROTEIN SWI5 HOMOLOG"/>
    <property type="match status" value="1"/>
</dbReference>
<dbReference type="PANTHER" id="PTHR28529:SF2">
    <property type="entry name" value="DNA REPAIR PROTEIN SWI5 HOMOLOG"/>
    <property type="match status" value="1"/>
</dbReference>
<dbReference type="Pfam" id="PF07061">
    <property type="entry name" value="Swi5"/>
    <property type="match status" value="1"/>
</dbReference>
<organism>
    <name type="scientific">Anoplopoma fimbria</name>
    <name type="common">Sablefish</name>
    <dbReference type="NCBI Taxonomy" id="229290"/>
    <lineage>
        <taxon>Eukaryota</taxon>
        <taxon>Metazoa</taxon>
        <taxon>Chordata</taxon>
        <taxon>Craniata</taxon>
        <taxon>Vertebrata</taxon>
        <taxon>Euteleostomi</taxon>
        <taxon>Actinopterygii</taxon>
        <taxon>Neopterygii</taxon>
        <taxon>Teleostei</taxon>
        <taxon>Neoteleostei</taxon>
        <taxon>Acanthomorphata</taxon>
        <taxon>Eupercaria</taxon>
        <taxon>Perciformes</taxon>
        <taxon>Cottioidei</taxon>
        <taxon>Anoplopomatales</taxon>
        <taxon>Anoplopomatidae</taxon>
        <taxon>Anoplopoma</taxon>
    </lineage>
</organism>
<name>SWI5_ANOFI</name>
<sequence length="136" mass="15244">MNTEQSAEPHYSNSKCLISTPEGKDLKNGAVKRTPSSKFKRVHSNFKSPLQVPESAKVSPAEEVAELEGRREQLDAEIAQLEVEGCRVEELEHHIDMLHEYNDIKDIGQSLLGRIAAVRGTTTRDLYSHFGLELDD</sequence>
<reference key="1">
    <citation type="submission" date="2009-05" db="EMBL/GenBank/DDBJ databases">
        <title>Anoplopoma fimbria ESTs and full-length cDNAs.</title>
        <authorList>
            <person name="Messmer A."/>
            <person name="Rondeau E."/>
            <person name="Sanderson D."/>
            <person name="Cooper G.A."/>
            <person name="Leong J."/>
            <person name="Koop B.F."/>
        </authorList>
    </citation>
    <scope>NUCLEOTIDE SEQUENCE [LARGE SCALE MRNA]</scope>
    <source>
        <tissue>Brain</tissue>
    </source>
</reference>
<proteinExistence type="evidence at transcript level"/>
<feature type="chain" id="PRO_0000406979" description="DNA repair protein SWI5 homolog">
    <location>
        <begin position="1"/>
        <end position="136"/>
    </location>
</feature>
<feature type="region of interest" description="Disordered" evidence="3">
    <location>
        <begin position="1"/>
        <end position="43"/>
    </location>
</feature>
<feature type="coiled-coil region" evidence="2">
    <location>
        <begin position="61"/>
        <end position="92"/>
    </location>
</feature>
<feature type="compositionally biased region" description="Polar residues" evidence="3">
    <location>
        <begin position="1"/>
        <end position="17"/>
    </location>
</feature>
<comment type="function">
    <text evidence="1">Component of the swi5-sfr1 complex, a complex required for double-strand break repair via homologous recombination.</text>
</comment>
<comment type="subunit">
    <text evidence="1">Component of the swi5-sfr1 complex.</text>
</comment>
<comment type="subcellular location">
    <subcellularLocation>
        <location evidence="1">Nucleus</location>
    </subcellularLocation>
</comment>
<comment type="similarity">
    <text evidence="4">Belongs to the SWI5/SAE3 family.</text>
</comment>
<protein>
    <recommendedName>
        <fullName>DNA repair protein SWI5 homolog</fullName>
    </recommendedName>
    <alternativeName>
        <fullName>Protein SAE3 homolog</fullName>
    </alternativeName>
</protein>
<accession>C3KJF2</accession>
<evidence type="ECO:0000250" key="1"/>
<evidence type="ECO:0000255" key="2"/>
<evidence type="ECO:0000256" key="3">
    <source>
        <dbReference type="SAM" id="MobiDB-lite"/>
    </source>
</evidence>
<evidence type="ECO:0000305" key="4"/>